<keyword id="KW-0143">Chaperone</keyword>
<keyword id="KW-0963">Cytoplasm</keyword>
<proteinExistence type="inferred from homology"/>
<sequence>MNIRXLHDRVIVKRKEVETKSAGGIVLTGSAAAKSTRGEVLAVGNGRILENGEVKPLDVKVGDIVIFNDGYGVKSEKIDNEEXLIMSDSDXLAIVEA</sequence>
<gene>
    <name evidence="1" type="primary">groES</name>
    <name evidence="1" type="synonym">groS</name>
    <name type="synonym">mopB</name>
</gene>
<name>CH10_STEMA</name>
<reference key="1">
    <citation type="submission" date="1997-02" db="EMBL/GenBank/DDBJ databases">
        <title>Cloning and sequence analysis of the GroESL genes in Stenotrophomonas maltophilia.</title>
        <authorList>
            <person name="Serafica M.D.E."/>
            <person name="Yuriev O."/>
            <person name="Britz M.L."/>
        </authorList>
    </citation>
    <scope>NUCLEOTIDE SEQUENCE [GENOMIC DNA]</scope>
</reference>
<dbReference type="EMBL" id="U68778">
    <property type="protein sequence ID" value="AAB42014.1"/>
    <property type="molecule type" value="Genomic_DNA"/>
</dbReference>
<dbReference type="EMBL" id="U68780">
    <property type="protein sequence ID" value="AAD00170.1"/>
    <property type="molecule type" value="Genomic_DNA"/>
</dbReference>
<dbReference type="GO" id="GO:0005737">
    <property type="term" value="C:cytoplasm"/>
    <property type="evidence" value="ECO:0007669"/>
    <property type="project" value="UniProtKB-SubCell"/>
</dbReference>
<dbReference type="GO" id="GO:0005524">
    <property type="term" value="F:ATP binding"/>
    <property type="evidence" value="ECO:0007669"/>
    <property type="project" value="InterPro"/>
</dbReference>
<dbReference type="GO" id="GO:0046872">
    <property type="term" value="F:metal ion binding"/>
    <property type="evidence" value="ECO:0007669"/>
    <property type="project" value="TreeGrafter"/>
</dbReference>
<dbReference type="GO" id="GO:0044183">
    <property type="term" value="F:protein folding chaperone"/>
    <property type="evidence" value="ECO:0007669"/>
    <property type="project" value="InterPro"/>
</dbReference>
<dbReference type="GO" id="GO:0051087">
    <property type="term" value="F:protein-folding chaperone binding"/>
    <property type="evidence" value="ECO:0007669"/>
    <property type="project" value="TreeGrafter"/>
</dbReference>
<dbReference type="GO" id="GO:0051082">
    <property type="term" value="F:unfolded protein binding"/>
    <property type="evidence" value="ECO:0007669"/>
    <property type="project" value="TreeGrafter"/>
</dbReference>
<dbReference type="GO" id="GO:0051085">
    <property type="term" value="P:chaperone cofactor-dependent protein refolding"/>
    <property type="evidence" value="ECO:0007669"/>
    <property type="project" value="TreeGrafter"/>
</dbReference>
<dbReference type="CDD" id="cd00320">
    <property type="entry name" value="cpn10"/>
    <property type="match status" value="1"/>
</dbReference>
<dbReference type="FunFam" id="2.30.33.40:FF:000001">
    <property type="entry name" value="10 kDa chaperonin"/>
    <property type="match status" value="1"/>
</dbReference>
<dbReference type="Gene3D" id="2.30.33.40">
    <property type="entry name" value="GroES chaperonin"/>
    <property type="match status" value="1"/>
</dbReference>
<dbReference type="HAMAP" id="MF_00580">
    <property type="entry name" value="CH10"/>
    <property type="match status" value="1"/>
</dbReference>
<dbReference type="InterPro" id="IPR020818">
    <property type="entry name" value="Chaperonin_GroES"/>
</dbReference>
<dbReference type="InterPro" id="IPR037124">
    <property type="entry name" value="Chaperonin_GroES_sf"/>
</dbReference>
<dbReference type="InterPro" id="IPR011032">
    <property type="entry name" value="GroES-like_sf"/>
</dbReference>
<dbReference type="NCBIfam" id="NF001526">
    <property type="entry name" value="PRK00364.1-1"/>
    <property type="match status" value="1"/>
</dbReference>
<dbReference type="PANTHER" id="PTHR10772">
    <property type="entry name" value="10 KDA HEAT SHOCK PROTEIN"/>
    <property type="match status" value="1"/>
</dbReference>
<dbReference type="PANTHER" id="PTHR10772:SF58">
    <property type="entry name" value="CO-CHAPERONIN GROES"/>
    <property type="match status" value="1"/>
</dbReference>
<dbReference type="Pfam" id="PF00166">
    <property type="entry name" value="Cpn10"/>
    <property type="match status" value="1"/>
</dbReference>
<dbReference type="PRINTS" id="PR00297">
    <property type="entry name" value="CHAPERONIN10"/>
</dbReference>
<dbReference type="SMART" id="SM00883">
    <property type="entry name" value="Cpn10"/>
    <property type="match status" value="1"/>
</dbReference>
<dbReference type="SUPFAM" id="SSF50129">
    <property type="entry name" value="GroES-like"/>
    <property type="match status" value="1"/>
</dbReference>
<dbReference type="PROSITE" id="PS00681">
    <property type="entry name" value="CHAPERONINS_CPN10"/>
    <property type="match status" value="1"/>
</dbReference>
<evidence type="ECO:0000255" key="1">
    <source>
        <dbReference type="HAMAP-Rule" id="MF_00580"/>
    </source>
</evidence>
<evidence type="ECO:0000305" key="2"/>
<feature type="chain" id="PRO_0000174906" description="Co-chaperonin GroES">
    <location>
        <begin position="1"/>
        <end position="97"/>
    </location>
</feature>
<organism>
    <name type="scientific">Stenotrophomonas maltophilia</name>
    <name type="common">Pseudomonas maltophilia</name>
    <name type="synonym">Xanthomonas maltophilia</name>
    <dbReference type="NCBI Taxonomy" id="40324"/>
    <lineage>
        <taxon>Bacteria</taxon>
        <taxon>Pseudomonadati</taxon>
        <taxon>Pseudomonadota</taxon>
        <taxon>Gammaproteobacteria</taxon>
        <taxon>Lysobacterales</taxon>
        <taxon>Lysobacteraceae</taxon>
        <taxon>Stenotrophomonas</taxon>
        <taxon>Stenotrophomonas maltophilia group</taxon>
    </lineage>
</organism>
<comment type="function">
    <text evidence="1">Together with the chaperonin GroEL, plays an essential role in assisting protein folding. The GroEL-GroES system forms a nano-cage that allows encapsulation of the non-native substrate proteins and provides a physical environment optimized to promote and accelerate protein folding. GroES binds to the apical surface of the GroEL ring, thereby capping the opening of the GroEL channel.</text>
</comment>
<comment type="subunit">
    <text evidence="1">Heptamer of 7 subunits arranged in a ring. Interacts with the chaperonin GroEL.</text>
</comment>
<comment type="subcellular location">
    <subcellularLocation>
        <location evidence="1">Cytoplasm</location>
    </subcellularLocation>
</comment>
<comment type="similarity">
    <text evidence="1 2">Belongs to the GroES chaperonin family.</text>
</comment>
<accession>P95801</accession>
<protein>
    <recommendedName>
        <fullName evidence="1">Co-chaperonin GroES</fullName>
    </recommendedName>
    <alternativeName>
        <fullName evidence="1">10 kDa chaperonin</fullName>
    </alternativeName>
    <alternativeName>
        <fullName evidence="1">Chaperonin-10</fullName>
        <shortName evidence="1">Cpn10</shortName>
    </alternativeName>
</protein>